<organism>
    <name type="scientific">Saccharolobus islandicus (strain M.16.27)</name>
    <name type="common">Sulfolobus islandicus</name>
    <dbReference type="NCBI Taxonomy" id="427318"/>
    <lineage>
        <taxon>Archaea</taxon>
        <taxon>Thermoproteota</taxon>
        <taxon>Thermoprotei</taxon>
        <taxon>Sulfolobales</taxon>
        <taxon>Sulfolobaceae</taxon>
        <taxon>Saccharolobus</taxon>
    </lineage>
</organism>
<sequence length="131" mass="14535">MSITYTTVGELKVGSYVVIDGEPCRVVEVTKAKTGKHGSAKANVVAIGVFSGAKKTLMAPVDQQVEVPIIEKHIGQIIADMGDKIQVMDLETYETFEIEKPTEDELASKIRPNAELEYWEIMGRRKIVRVK</sequence>
<gene>
    <name type="primary">eIF5A</name>
    <name type="ordered locus">M1627_1303</name>
</gene>
<keyword id="KW-0963">Cytoplasm</keyword>
<keyword id="KW-0385">Hypusine</keyword>
<keyword id="KW-0396">Initiation factor</keyword>
<keyword id="KW-0648">Protein biosynthesis</keyword>
<protein>
    <recommendedName>
        <fullName evidence="1">Translation initiation factor 5A</fullName>
    </recommendedName>
    <alternativeName>
        <fullName evidence="1">Hypusine-containing protein</fullName>
    </alternativeName>
    <alternativeName>
        <fullName evidence="1">eIF-5A</fullName>
    </alternativeName>
</protein>
<comment type="function">
    <text evidence="1">Functions by promoting the formation of the first peptide bond.</text>
</comment>
<comment type="subcellular location">
    <subcellularLocation>
        <location evidence="1">Cytoplasm</location>
    </subcellularLocation>
</comment>
<comment type="similarity">
    <text evidence="1">Belongs to the eIF-5A family.</text>
</comment>
<evidence type="ECO:0000255" key="1">
    <source>
        <dbReference type="HAMAP-Rule" id="MF_00085"/>
    </source>
</evidence>
<dbReference type="EMBL" id="CP001401">
    <property type="protein sequence ID" value="ACP55186.1"/>
    <property type="molecule type" value="Genomic_DNA"/>
</dbReference>
<dbReference type="RefSeq" id="WP_012711261.1">
    <property type="nucleotide sequence ID" value="NC_012632.1"/>
</dbReference>
<dbReference type="SMR" id="C3N5B1"/>
<dbReference type="KEGG" id="sim:M1627_1303"/>
<dbReference type="HOGENOM" id="CLU_102600_3_0_2"/>
<dbReference type="Proteomes" id="UP000002307">
    <property type="component" value="Chromosome"/>
</dbReference>
<dbReference type="GO" id="GO:0005737">
    <property type="term" value="C:cytoplasm"/>
    <property type="evidence" value="ECO:0007669"/>
    <property type="project" value="UniProtKB-SubCell"/>
</dbReference>
<dbReference type="GO" id="GO:0043022">
    <property type="term" value="F:ribosome binding"/>
    <property type="evidence" value="ECO:0007669"/>
    <property type="project" value="InterPro"/>
</dbReference>
<dbReference type="GO" id="GO:0003723">
    <property type="term" value="F:RNA binding"/>
    <property type="evidence" value="ECO:0007669"/>
    <property type="project" value="InterPro"/>
</dbReference>
<dbReference type="GO" id="GO:0003746">
    <property type="term" value="F:translation elongation factor activity"/>
    <property type="evidence" value="ECO:0007669"/>
    <property type="project" value="InterPro"/>
</dbReference>
<dbReference type="GO" id="GO:0003743">
    <property type="term" value="F:translation initiation factor activity"/>
    <property type="evidence" value="ECO:0007669"/>
    <property type="project" value="UniProtKB-UniRule"/>
</dbReference>
<dbReference type="GO" id="GO:0045901">
    <property type="term" value="P:positive regulation of translational elongation"/>
    <property type="evidence" value="ECO:0007669"/>
    <property type="project" value="InterPro"/>
</dbReference>
<dbReference type="GO" id="GO:0045905">
    <property type="term" value="P:positive regulation of translational termination"/>
    <property type="evidence" value="ECO:0007669"/>
    <property type="project" value="InterPro"/>
</dbReference>
<dbReference type="CDD" id="cd04467">
    <property type="entry name" value="S1_aIF5A"/>
    <property type="match status" value="1"/>
</dbReference>
<dbReference type="FunFam" id="2.30.30.30:FF:000038">
    <property type="entry name" value="Translation initiation factor 5A"/>
    <property type="match status" value="1"/>
</dbReference>
<dbReference type="FunFam" id="2.40.50.140:FF:000334">
    <property type="entry name" value="Translation initiation factor 5A"/>
    <property type="match status" value="1"/>
</dbReference>
<dbReference type="Gene3D" id="2.30.30.30">
    <property type="match status" value="1"/>
</dbReference>
<dbReference type="Gene3D" id="2.40.50.140">
    <property type="entry name" value="Nucleic acid-binding proteins"/>
    <property type="match status" value="1"/>
</dbReference>
<dbReference type="HAMAP" id="MF_00085">
    <property type="entry name" value="eIF_5A"/>
    <property type="match status" value="1"/>
</dbReference>
<dbReference type="InterPro" id="IPR001884">
    <property type="entry name" value="IF5A-like"/>
</dbReference>
<dbReference type="InterPro" id="IPR048670">
    <property type="entry name" value="IF5A-like_N"/>
</dbReference>
<dbReference type="InterPro" id="IPR012340">
    <property type="entry name" value="NA-bd_OB-fold"/>
</dbReference>
<dbReference type="InterPro" id="IPR014722">
    <property type="entry name" value="Rib_uL2_dom2"/>
</dbReference>
<dbReference type="InterPro" id="IPR019769">
    <property type="entry name" value="Trans_elong_IF5A_hypusine_site"/>
</dbReference>
<dbReference type="InterPro" id="IPR022847">
    <property type="entry name" value="Transl_elong_IF5A_arc"/>
</dbReference>
<dbReference type="InterPro" id="IPR020189">
    <property type="entry name" value="Transl_elong_IF5A_C"/>
</dbReference>
<dbReference type="InterPro" id="IPR008991">
    <property type="entry name" value="Translation_prot_SH3-like_sf"/>
</dbReference>
<dbReference type="NCBIfam" id="TIGR00037">
    <property type="entry name" value="eIF_5A"/>
    <property type="match status" value="1"/>
</dbReference>
<dbReference type="NCBIfam" id="NF003076">
    <property type="entry name" value="PRK03999.1"/>
    <property type="match status" value="1"/>
</dbReference>
<dbReference type="PANTHER" id="PTHR11673">
    <property type="entry name" value="TRANSLATION INITIATION FACTOR 5A FAMILY MEMBER"/>
    <property type="match status" value="1"/>
</dbReference>
<dbReference type="Pfam" id="PF01287">
    <property type="entry name" value="eIF-5a"/>
    <property type="match status" value="1"/>
</dbReference>
<dbReference type="Pfam" id="PF21485">
    <property type="entry name" value="IF5A-like_N"/>
    <property type="match status" value="1"/>
</dbReference>
<dbReference type="PIRSF" id="PIRSF003025">
    <property type="entry name" value="eIF5A"/>
    <property type="match status" value="1"/>
</dbReference>
<dbReference type="SMART" id="SM01376">
    <property type="entry name" value="eIF-5a"/>
    <property type="match status" value="1"/>
</dbReference>
<dbReference type="SUPFAM" id="SSF50249">
    <property type="entry name" value="Nucleic acid-binding proteins"/>
    <property type="match status" value="1"/>
</dbReference>
<dbReference type="SUPFAM" id="SSF50104">
    <property type="entry name" value="Translation proteins SH3-like domain"/>
    <property type="match status" value="1"/>
</dbReference>
<dbReference type="PROSITE" id="PS00302">
    <property type="entry name" value="IF5A_HYPUSINE"/>
    <property type="match status" value="1"/>
</dbReference>
<feature type="chain" id="PRO_1000202603" description="Translation initiation factor 5A">
    <location>
        <begin position="1"/>
        <end position="131"/>
    </location>
</feature>
<feature type="modified residue" description="Hypusine" evidence="1">
    <location>
        <position position="36"/>
    </location>
</feature>
<reference key="1">
    <citation type="journal article" date="2009" name="Proc. Natl. Acad. Sci. U.S.A.">
        <title>Biogeography of the Sulfolobus islandicus pan-genome.</title>
        <authorList>
            <person name="Reno M.L."/>
            <person name="Held N.L."/>
            <person name="Fields C.J."/>
            <person name="Burke P.V."/>
            <person name="Whitaker R.J."/>
        </authorList>
    </citation>
    <scope>NUCLEOTIDE SEQUENCE [LARGE SCALE GENOMIC DNA]</scope>
    <source>
        <strain>M.16.27</strain>
    </source>
</reference>
<accession>C3N5B1</accession>
<name>IF5A_SACI3</name>
<proteinExistence type="inferred from homology"/>